<proteinExistence type="inferred from homology"/>
<protein>
    <recommendedName>
        <fullName evidence="1">Phenylalanine--tRNA ligase beta subunit</fullName>
        <ecNumber evidence="1">6.1.1.20</ecNumber>
    </recommendedName>
    <alternativeName>
        <fullName evidence="1">Phenylalanyl-tRNA synthetase beta subunit</fullName>
        <shortName evidence="1">PheRS</shortName>
    </alternativeName>
</protein>
<sequence>MKFSENWLRSHVPIQATRDELAATLTAIGLEVEEVIPLGESLGQVVVARIVEAMRHPEADRLQVCSVDAGQGELLQIVCGAPNARPGLVAPLALVGAKIGELTITAAKLRGVASNGMLCSAKELGLDSDAAGLFELPDDAPVGQALAEYLGLPDASIEIKLTPNRADCFSVRGIAFDVAAACASEVVAFDAGAVAPVSTRTLAVELDAGKDAPRYCGRVIEGIDPAAKTPVWLAERLRRSGVRPVSLLVDITQYVMLELGQPMHAFDLDTLHGPIGVRRSCAGEQLALLDGRQVTLDDSFLTIADAGRPVALAGLMGGLDTRVTETTRNVFLESAYFDPAAIMGRGRKLGLHTDAGHRFERGVDSALPPQAIEVATRLVLELAGGTPGPVVHAQLPQHLPQPARILLRRARIARVLGIQIDDVDVVRMLRALGMQLDAVAEGWEVMAPSRRFDIAIEEDLIEDLARIHGYDRVPTTLPGGASRIAMPSETQLDELSVRRQLVARELQETINYAFVDAALLERWQLTNGLVPLANPLSAELAIMRPCLLPGLVATLGRNAARQAGRVRLFELGKVFAAAADAGAAPQESQHVAAAVCGDALALQWGEAARKVDFHDVKGDLMALAAASGAQLEFQPSTQPFGHPGRSADIYRDGVCIGWIGQVHPRLAKALDIDVDVIAFELQLGPLVQRTLPCAGELSRFPSVRRDLAFLVPDEVSWAAVSASVRTTVGPLLREVQLFDRYVGQGVAPGFKSLAMGLILQDNSRTLTDRDVDAVVTDVVAVIEREHRARIRS</sequence>
<evidence type="ECO:0000255" key="1">
    <source>
        <dbReference type="HAMAP-Rule" id="MF_00283"/>
    </source>
</evidence>
<name>SYFB_XANOM</name>
<gene>
    <name evidence="1" type="primary">pheT</name>
    <name type="ordered locus">XOO3022</name>
</gene>
<dbReference type="EC" id="6.1.1.20" evidence="1"/>
<dbReference type="EMBL" id="AP008229">
    <property type="protein sequence ID" value="BAE69777.1"/>
    <property type="molecule type" value="Genomic_DNA"/>
</dbReference>
<dbReference type="RefSeq" id="WP_011409043.1">
    <property type="nucleotide sequence ID" value="NC_007705.1"/>
</dbReference>
<dbReference type="SMR" id="Q2P100"/>
<dbReference type="KEGG" id="xom:XOO3022"/>
<dbReference type="HOGENOM" id="CLU_016891_0_0_6"/>
<dbReference type="GO" id="GO:0009328">
    <property type="term" value="C:phenylalanine-tRNA ligase complex"/>
    <property type="evidence" value="ECO:0007669"/>
    <property type="project" value="TreeGrafter"/>
</dbReference>
<dbReference type="GO" id="GO:0005524">
    <property type="term" value="F:ATP binding"/>
    <property type="evidence" value="ECO:0007669"/>
    <property type="project" value="UniProtKB-UniRule"/>
</dbReference>
<dbReference type="GO" id="GO:0000287">
    <property type="term" value="F:magnesium ion binding"/>
    <property type="evidence" value="ECO:0007669"/>
    <property type="project" value="UniProtKB-UniRule"/>
</dbReference>
<dbReference type="GO" id="GO:0004826">
    <property type="term" value="F:phenylalanine-tRNA ligase activity"/>
    <property type="evidence" value="ECO:0007669"/>
    <property type="project" value="UniProtKB-UniRule"/>
</dbReference>
<dbReference type="GO" id="GO:0000049">
    <property type="term" value="F:tRNA binding"/>
    <property type="evidence" value="ECO:0007669"/>
    <property type="project" value="UniProtKB-KW"/>
</dbReference>
<dbReference type="GO" id="GO:0006432">
    <property type="term" value="P:phenylalanyl-tRNA aminoacylation"/>
    <property type="evidence" value="ECO:0007669"/>
    <property type="project" value="UniProtKB-UniRule"/>
</dbReference>
<dbReference type="CDD" id="cd00769">
    <property type="entry name" value="PheRS_beta_core"/>
    <property type="match status" value="1"/>
</dbReference>
<dbReference type="CDD" id="cd02796">
    <property type="entry name" value="tRNA_bind_bactPheRS"/>
    <property type="match status" value="1"/>
</dbReference>
<dbReference type="FunFam" id="2.40.50.140:FF:000045">
    <property type="entry name" value="Phenylalanine--tRNA ligase beta subunit"/>
    <property type="match status" value="1"/>
</dbReference>
<dbReference type="FunFam" id="3.30.56.10:FF:000002">
    <property type="entry name" value="Phenylalanine--tRNA ligase beta subunit"/>
    <property type="match status" value="1"/>
</dbReference>
<dbReference type="FunFam" id="3.30.70.380:FF:000001">
    <property type="entry name" value="Phenylalanine--tRNA ligase beta subunit"/>
    <property type="match status" value="1"/>
</dbReference>
<dbReference type="FunFam" id="3.30.930.10:FF:000022">
    <property type="entry name" value="Phenylalanine--tRNA ligase beta subunit"/>
    <property type="match status" value="1"/>
</dbReference>
<dbReference type="FunFam" id="3.50.40.10:FF:000001">
    <property type="entry name" value="Phenylalanine--tRNA ligase beta subunit"/>
    <property type="match status" value="1"/>
</dbReference>
<dbReference type="Gene3D" id="3.30.56.10">
    <property type="match status" value="2"/>
</dbReference>
<dbReference type="Gene3D" id="3.30.930.10">
    <property type="entry name" value="Bira Bifunctional Protein, Domain 2"/>
    <property type="match status" value="1"/>
</dbReference>
<dbReference type="Gene3D" id="3.30.70.380">
    <property type="entry name" value="Ferrodoxin-fold anticodon-binding domain"/>
    <property type="match status" value="1"/>
</dbReference>
<dbReference type="Gene3D" id="2.40.50.140">
    <property type="entry name" value="Nucleic acid-binding proteins"/>
    <property type="match status" value="1"/>
</dbReference>
<dbReference type="Gene3D" id="3.50.40.10">
    <property type="entry name" value="Phenylalanyl-trna Synthetase, Chain B, domain 3"/>
    <property type="match status" value="1"/>
</dbReference>
<dbReference type="HAMAP" id="MF_00283">
    <property type="entry name" value="Phe_tRNA_synth_beta1"/>
    <property type="match status" value="1"/>
</dbReference>
<dbReference type="InterPro" id="IPR045864">
    <property type="entry name" value="aa-tRNA-synth_II/BPL/LPL"/>
</dbReference>
<dbReference type="InterPro" id="IPR005146">
    <property type="entry name" value="B3/B4_tRNA-bd"/>
</dbReference>
<dbReference type="InterPro" id="IPR009061">
    <property type="entry name" value="DNA-bd_dom_put_sf"/>
</dbReference>
<dbReference type="InterPro" id="IPR005121">
    <property type="entry name" value="Fdx_antiC-bd"/>
</dbReference>
<dbReference type="InterPro" id="IPR036690">
    <property type="entry name" value="Fdx_antiC-bd_sf"/>
</dbReference>
<dbReference type="InterPro" id="IPR012340">
    <property type="entry name" value="NA-bd_OB-fold"/>
</dbReference>
<dbReference type="InterPro" id="IPR045060">
    <property type="entry name" value="Phe-tRNA-ligase_IIc_bsu"/>
</dbReference>
<dbReference type="InterPro" id="IPR004532">
    <property type="entry name" value="Phe-tRNA-ligase_IIc_bsu_bact"/>
</dbReference>
<dbReference type="InterPro" id="IPR020825">
    <property type="entry name" value="Phe-tRNA_synthase-like_B3/B4"/>
</dbReference>
<dbReference type="InterPro" id="IPR041616">
    <property type="entry name" value="PheRS_beta_core"/>
</dbReference>
<dbReference type="InterPro" id="IPR002547">
    <property type="entry name" value="tRNA-bd_dom"/>
</dbReference>
<dbReference type="InterPro" id="IPR033714">
    <property type="entry name" value="tRNA_bind_bactPheRS"/>
</dbReference>
<dbReference type="InterPro" id="IPR005147">
    <property type="entry name" value="tRNA_synthase_B5-dom"/>
</dbReference>
<dbReference type="NCBIfam" id="TIGR00472">
    <property type="entry name" value="pheT_bact"/>
    <property type="match status" value="1"/>
</dbReference>
<dbReference type="NCBIfam" id="NF045760">
    <property type="entry name" value="YtpR"/>
    <property type="match status" value="1"/>
</dbReference>
<dbReference type="PANTHER" id="PTHR10947:SF0">
    <property type="entry name" value="PHENYLALANINE--TRNA LIGASE BETA SUBUNIT"/>
    <property type="match status" value="1"/>
</dbReference>
<dbReference type="PANTHER" id="PTHR10947">
    <property type="entry name" value="PHENYLALANYL-TRNA SYNTHETASE BETA CHAIN AND LEUCINE-RICH REPEAT-CONTAINING PROTEIN 47"/>
    <property type="match status" value="1"/>
</dbReference>
<dbReference type="Pfam" id="PF03483">
    <property type="entry name" value="B3_4"/>
    <property type="match status" value="1"/>
</dbReference>
<dbReference type="Pfam" id="PF03484">
    <property type="entry name" value="B5"/>
    <property type="match status" value="1"/>
</dbReference>
<dbReference type="Pfam" id="PF03147">
    <property type="entry name" value="FDX-ACB"/>
    <property type="match status" value="1"/>
</dbReference>
<dbReference type="Pfam" id="PF01588">
    <property type="entry name" value="tRNA_bind"/>
    <property type="match status" value="1"/>
</dbReference>
<dbReference type="Pfam" id="PF17759">
    <property type="entry name" value="tRNA_synthFbeta"/>
    <property type="match status" value="1"/>
</dbReference>
<dbReference type="SMART" id="SM00873">
    <property type="entry name" value="B3_4"/>
    <property type="match status" value="1"/>
</dbReference>
<dbReference type="SMART" id="SM00874">
    <property type="entry name" value="B5"/>
    <property type="match status" value="1"/>
</dbReference>
<dbReference type="SMART" id="SM00896">
    <property type="entry name" value="FDX-ACB"/>
    <property type="match status" value="1"/>
</dbReference>
<dbReference type="SUPFAM" id="SSF54991">
    <property type="entry name" value="Anticodon-binding domain of PheRS"/>
    <property type="match status" value="1"/>
</dbReference>
<dbReference type="SUPFAM" id="SSF55681">
    <property type="entry name" value="Class II aaRS and biotin synthetases"/>
    <property type="match status" value="1"/>
</dbReference>
<dbReference type="SUPFAM" id="SSF50249">
    <property type="entry name" value="Nucleic acid-binding proteins"/>
    <property type="match status" value="1"/>
</dbReference>
<dbReference type="SUPFAM" id="SSF56037">
    <property type="entry name" value="PheT/TilS domain"/>
    <property type="match status" value="1"/>
</dbReference>
<dbReference type="SUPFAM" id="SSF46955">
    <property type="entry name" value="Putative DNA-binding domain"/>
    <property type="match status" value="1"/>
</dbReference>
<dbReference type="PROSITE" id="PS51483">
    <property type="entry name" value="B5"/>
    <property type="match status" value="1"/>
</dbReference>
<dbReference type="PROSITE" id="PS51447">
    <property type="entry name" value="FDX_ACB"/>
    <property type="match status" value="1"/>
</dbReference>
<dbReference type="PROSITE" id="PS50886">
    <property type="entry name" value="TRBD"/>
    <property type="match status" value="1"/>
</dbReference>
<comment type="catalytic activity">
    <reaction evidence="1">
        <text>tRNA(Phe) + L-phenylalanine + ATP = L-phenylalanyl-tRNA(Phe) + AMP + diphosphate + H(+)</text>
        <dbReference type="Rhea" id="RHEA:19413"/>
        <dbReference type="Rhea" id="RHEA-COMP:9668"/>
        <dbReference type="Rhea" id="RHEA-COMP:9699"/>
        <dbReference type="ChEBI" id="CHEBI:15378"/>
        <dbReference type="ChEBI" id="CHEBI:30616"/>
        <dbReference type="ChEBI" id="CHEBI:33019"/>
        <dbReference type="ChEBI" id="CHEBI:58095"/>
        <dbReference type="ChEBI" id="CHEBI:78442"/>
        <dbReference type="ChEBI" id="CHEBI:78531"/>
        <dbReference type="ChEBI" id="CHEBI:456215"/>
        <dbReference type="EC" id="6.1.1.20"/>
    </reaction>
</comment>
<comment type="cofactor">
    <cofactor evidence="1">
        <name>Mg(2+)</name>
        <dbReference type="ChEBI" id="CHEBI:18420"/>
    </cofactor>
    <text evidence="1">Binds 2 magnesium ions per tetramer.</text>
</comment>
<comment type="subunit">
    <text evidence="1">Tetramer of two alpha and two beta subunits.</text>
</comment>
<comment type="subcellular location">
    <subcellularLocation>
        <location evidence="1">Cytoplasm</location>
    </subcellularLocation>
</comment>
<comment type="similarity">
    <text evidence="1">Belongs to the phenylalanyl-tRNA synthetase beta subunit family. Type 1 subfamily.</text>
</comment>
<feature type="chain" id="PRO_0000232100" description="Phenylalanine--tRNA ligase beta subunit">
    <location>
        <begin position="1"/>
        <end position="792"/>
    </location>
</feature>
<feature type="domain" description="tRNA-binding" evidence="1">
    <location>
        <begin position="39"/>
        <end position="147"/>
    </location>
</feature>
<feature type="domain" description="B5" evidence="1">
    <location>
        <begin position="400"/>
        <end position="475"/>
    </location>
</feature>
<feature type="domain" description="FDX-ACB" evidence="1">
    <location>
        <begin position="698"/>
        <end position="791"/>
    </location>
</feature>
<feature type="binding site" evidence="1">
    <location>
        <position position="453"/>
    </location>
    <ligand>
        <name>Mg(2+)</name>
        <dbReference type="ChEBI" id="CHEBI:18420"/>
        <note>shared with alpha subunit</note>
    </ligand>
</feature>
<feature type="binding site" evidence="1">
    <location>
        <position position="459"/>
    </location>
    <ligand>
        <name>Mg(2+)</name>
        <dbReference type="ChEBI" id="CHEBI:18420"/>
        <note>shared with alpha subunit</note>
    </ligand>
</feature>
<feature type="binding site" evidence="1">
    <location>
        <position position="462"/>
    </location>
    <ligand>
        <name>Mg(2+)</name>
        <dbReference type="ChEBI" id="CHEBI:18420"/>
        <note>shared with alpha subunit</note>
    </ligand>
</feature>
<feature type="binding site" evidence="1">
    <location>
        <position position="463"/>
    </location>
    <ligand>
        <name>Mg(2+)</name>
        <dbReference type="ChEBI" id="CHEBI:18420"/>
        <note>shared with alpha subunit</note>
    </ligand>
</feature>
<accession>Q2P100</accession>
<keyword id="KW-0030">Aminoacyl-tRNA synthetase</keyword>
<keyword id="KW-0067">ATP-binding</keyword>
<keyword id="KW-0963">Cytoplasm</keyword>
<keyword id="KW-0436">Ligase</keyword>
<keyword id="KW-0460">Magnesium</keyword>
<keyword id="KW-0479">Metal-binding</keyword>
<keyword id="KW-0547">Nucleotide-binding</keyword>
<keyword id="KW-0648">Protein biosynthesis</keyword>
<keyword id="KW-0694">RNA-binding</keyword>
<keyword id="KW-0820">tRNA-binding</keyword>
<organism>
    <name type="scientific">Xanthomonas oryzae pv. oryzae (strain MAFF 311018)</name>
    <dbReference type="NCBI Taxonomy" id="342109"/>
    <lineage>
        <taxon>Bacteria</taxon>
        <taxon>Pseudomonadati</taxon>
        <taxon>Pseudomonadota</taxon>
        <taxon>Gammaproteobacteria</taxon>
        <taxon>Lysobacterales</taxon>
        <taxon>Lysobacteraceae</taxon>
        <taxon>Xanthomonas</taxon>
    </lineage>
</organism>
<reference key="1">
    <citation type="journal article" date="2005" name="Jpn. Agric. Res. Q.">
        <title>Genome sequence of Xanthomonas oryzae pv. oryzae suggests contribution of large numbers of effector genes and insertion sequences to its race diversity.</title>
        <authorList>
            <person name="Ochiai H."/>
            <person name="Inoue Y."/>
            <person name="Takeya M."/>
            <person name="Sasaki A."/>
            <person name="Kaku H."/>
        </authorList>
    </citation>
    <scope>NUCLEOTIDE SEQUENCE [LARGE SCALE GENOMIC DNA]</scope>
    <source>
        <strain>MAFF 311018</strain>
    </source>
</reference>